<organism>
    <name type="scientific">Escherichia coli (strain UTI89 / UPEC)</name>
    <dbReference type="NCBI Taxonomy" id="364106"/>
    <lineage>
        <taxon>Bacteria</taxon>
        <taxon>Pseudomonadati</taxon>
        <taxon>Pseudomonadota</taxon>
        <taxon>Gammaproteobacteria</taxon>
        <taxon>Enterobacterales</taxon>
        <taxon>Enterobacteriaceae</taxon>
        <taxon>Escherichia</taxon>
    </lineage>
</organism>
<proteinExistence type="inferred from homology"/>
<feature type="chain" id="PRO_0000271501" description="Xylose import ATP-binding protein XylG">
    <location>
        <begin position="1"/>
        <end position="513"/>
    </location>
</feature>
<feature type="domain" description="ABC transporter 1" evidence="1">
    <location>
        <begin position="5"/>
        <end position="242"/>
    </location>
</feature>
<feature type="domain" description="ABC transporter 2" evidence="1">
    <location>
        <begin position="259"/>
        <end position="505"/>
    </location>
</feature>
<feature type="binding site" evidence="1">
    <location>
        <begin position="37"/>
        <end position="44"/>
    </location>
    <ligand>
        <name>ATP</name>
        <dbReference type="ChEBI" id="CHEBI:30616"/>
    </ligand>
</feature>
<dbReference type="EC" id="7.5.2.10" evidence="1"/>
<dbReference type="EMBL" id="CP000243">
    <property type="protein sequence ID" value="ABE09536.1"/>
    <property type="status" value="ALT_INIT"/>
    <property type="molecule type" value="Genomic_DNA"/>
</dbReference>
<dbReference type="RefSeq" id="WP_001146512.1">
    <property type="nucleotide sequence ID" value="NZ_CP064825.1"/>
</dbReference>
<dbReference type="SMR" id="Q1R528"/>
<dbReference type="KEGG" id="eci:UTI89_C4108"/>
<dbReference type="HOGENOM" id="CLU_000604_92_3_6"/>
<dbReference type="Proteomes" id="UP000001952">
    <property type="component" value="Chromosome"/>
</dbReference>
<dbReference type="GO" id="GO:0005886">
    <property type="term" value="C:plasma membrane"/>
    <property type="evidence" value="ECO:0007669"/>
    <property type="project" value="UniProtKB-SubCell"/>
</dbReference>
<dbReference type="GO" id="GO:0015614">
    <property type="term" value="F:ABC-type D-xylose transporter activity"/>
    <property type="evidence" value="ECO:0007669"/>
    <property type="project" value="UniProtKB-EC"/>
</dbReference>
<dbReference type="GO" id="GO:0005524">
    <property type="term" value="F:ATP binding"/>
    <property type="evidence" value="ECO:0007669"/>
    <property type="project" value="UniProtKB-KW"/>
</dbReference>
<dbReference type="GO" id="GO:0016887">
    <property type="term" value="F:ATP hydrolysis activity"/>
    <property type="evidence" value="ECO:0007669"/>
    <property type="project" value="InterPro"/>
</dbReference>
<dbReference type="CDD" id="cd03216">
    <property type="entry name" value="ABC_Carb_Monos_I"/>
    <property type="match status" value="1"/>
</dbReference>
<dbReference type="CDD" id="cd03215">
    <property type="entry name" value="ABC_Carb_Monos_II"/>
    <property type="match status" value="1"/>
</dbReference>
<dbReference type="FunFam" id="3.40.50.300:FF:000126">
    <property type="entry name" value="Galactose/methyl galactoside import ATP-binding protein MglA"/>
    <property type="match status" value="1"/>
</dbReference>
<dbReference type="FunFam" id="3.40.50.300:FF:000127">
    <property type="entry name" value="Ribose import ATP-binding protein RbsA"/>
    <property type="match status" value="1"/>
</dbReference>
<dbReference type="Gene3D" id="3.40.50.300">
    <property type="entry name" value="P-loop containing nucleotide triphosphate hydrolases"/>
    <property type="match status" value="2"/>
</dbReference>
<dbReference type="InterPro" id="IPR003593">
    <property type="entry name" value="AAA+_ATPase"/>
</dbReference>
<dbReference type="InterPro" id="IPR050107">
    <property type="entry name" value="ABC_carbohydrate_import_ATPase"/>
</dbReference>
<dbReference type="InterPro" id="IPR003439">
    <property type="entry name" value="ABC_transporter-like_ATP-bd"/>
</dbReference>
<dbReference type="InterPro" id="IPR017871">
    <property type="entry name" value="ABC_transporter-like_CS"/>
</dbReference>
<dbReference type="InterPro" id="IPR013455">
    <property type="entry name" value="ABC_transptr_XylG"/>
</dbReference>
<dbReference type="InterPro" id="IPR027417">
    <property type="entry name" value="P-loop_NTPase"/>
</dbReference>
<dbReference type="NCBIfam" id="NF010069">
    <property type="entry name" value="PRK13549.1"/>
    <property type="match status" value="1"/>
</dbReference>
<dbReference type="NCBIfam" id="TIGR02633">
    <property type="entry name" value="xylG"/>
    <property type="match status" value="1"/>
</dbReference>
<dbReference type="PANTHER" id="PTHR43790">
    <property type="entry name" value="CARBOHYDRATE TRANSPORT ATP-BINDING PROTEIN MG119-RELATED"/>
    <property type="match status" value="1"/>
</dbReference>
<dbReference type="PANTHER" id="PTHR43790:SF1">
    <property type="entry name" value="XYLOSE IMPORT ATP-BINDING PROTEIN XYLG"/>
    <property type="match status" value="1"/>
</dbReference>
<dbReference type="Pfam" id="PF00005">
    <property type="entry name" value="ABC_tran"/>
    <property type="match status" value="2"/>
</dbReference>
<dbReference type="SMART" id="SM00382">
    <property type="entry name" value="AAA"/>
    <property type="match status" value="2"/>
</dbReference>
<dbReference type="SUPFAM" id="SSF52540">
    <property type="entry name" value="P-loop containing nucleoside triphosphate hydrolases"/>
    <property type="match status" value="2"/>
</dbReference>
<dbReference type="PROSITE" id="PS00211">
    <property type="entry name" value="ABC_TRANSPORTER_1"/>
    <property type="match status" value="1"/>
</dbReference>
<dbReference type="PROSITE" id="PS50893">
    <property type="entry name" value="ABC_TRANSPORTER_2"/>
    <property type="match status" value="2"/>
</dbReference>
<dbReference type="PROSITE" id="PS51280">
    <property type="entry name" value="XYLG"/>
    <property type="match status" value="1"/>
</dbReference>
<gene>
    <name evidence="1" type="primary">xylG</name>
    <name type="ordered locus">UTI89_C4108</name>
</gene>
<name>XYLG_ECOUT</name>
<keyword id="KW-0067">ATP-binding</keyword>
<keyword id="KW-0997">Cell inner membrane</keyword>
<keyword id="KW-1003">Cell membrane</keyword>
<keyword id="KW-0472">Membrane</keyword>
<keyword id="KW-0547">Nucleotide-binding</keyword>
<keyword id="KW-0677">Repeat</keyword>
<keyword id="KW-0762">Sugar transport</keyword>
<keyword id="KW-1278">Translocase</keyword>
<keyword id="KW-0813">Transport</keyword>
<protein>
    <recommendedName>
        <fullName evidence="1">Xylose import ATP-binding protein XylG</fullName>
        <ecNumber evidence="1">7.5.2.10</ecNumber>
    </recommendedName>
</protein>
<reference key="1">
    <citation type="journal article" date="2006" name="Proc. Natl. Acad. Sci. U.S.A.">
        <title>Identification of genes subject to positive selection in uropathogenic strains of Escherichia coli: a comparative genomics approach.</title>
        <authorList>
            <person name="Chen S.L."/>
            <person name="Hung C.-S."/>
            <person name="Xu J."/>
            <person name="Reigstad C.S."/>
            <person name="Magrini V."/>
            <person name="Sabo A."/>
            <person name="Blasiar D."/>
            <person name="Bieri T."/>
            <person name="Meyer R.R."/>
            <person name="Ozersky P."/>
            <person name="Armstrong J.R."/>
            <person name="Fulton R.S."/>
            <person name="Latreille J.P."/>
            <person name="Spieth J."/>
            <person name="Hooton T.M."/>
            <person name="Mardis E.R."/>
            <person name="Hultgren S.J."/>
            <person name="Gordon J.I."/>
        </authorList>
    </citation>
    <scope>NUCLEOTIDE SEQUENCE [LARGE SCALE GENOMIC DNA]</scope>
    <source>
        <strain>UTI89 / UPEC</strain>
    </source>
</reference>
<sequence>MPYLLEMKNITKTFGSVKAIDNVSLRLNAGEIVSLCGENGSGKSTLMKVLCGIYPHGSYEGEIIFAGEEIQASHIRDTERKGIAIIHQELALVKELTVLENIFLGNEITHNGIMDYDLMTLRCQKLLAQVSLSISPDTRVGDLGLGQQQLVEIAKALNKQVRLLILDEPTASLTEQETSVLLDIIRDLQQHGIACIYISHKLNEVKAISDTICVIRDGQHIGTRDAAGMSEDDIITMMVGRELTALYPNEPHTTGDEILRIEHLTAWHPVNRHIKRVNDVSFSLKRGEILGIAGLVGAGRTETIQCLFGVWPGQWEGKIYIDGKQVDIRNCQQAIAQGIAMVPEDRKRDGIVPVMAVGKNITLAALNKFTGGISQLDDAAEQKCILESIQQLKVKTSSSDLAIGRLSGGNQQKAILARCLLLNPRILILDEPTRGIDIGAKYEIYKLINQLVQQGIAVIVISSELPEVLGLSDRVLVMHEGKLKANLINHNLTQEQVMEAALRSEHHVEKQSV</sequence>
<comment type="function">
    <text evidence="1">Part of the ABC transporter complex XylFGH involved in xylose import. Responsible for energy coupling to the transport system.</text>
</comment>
<comment type="catalytic activity">
    <reaction evidence="1">
        <text>D-xylose(out) + ATP + H2O = D-xylose(in) + ADP + phosphate + H(+)</text>
        <dbReference type="Rhea" id="RHEA:29899"/>
        <dbReference type="ChEBI" id="CHEBI:15377"/>
        <dbReference type="ChEBI" id="CHEBI:15378"/>
        <dbReference type="ChEBI" id="CHEBI:30616"/>
        <dbReference type="ChEBI" id="CHEBI:43474"/>
        <dbReference type="ChEBI" id="CHEBI:53455"/>
        <dbReference type="ChEBI" id="CHEBI:456216"/>
        <dbReference type="EC" id="7.5.2.10"/>
    </reaction>
</comment>
<comment type="subunit">
    <text evidence="1">The complex is composed of two ATP-binding proteins (XylG), two transmembrane proteins (XylH) and a solute-binding protein (XylF).</text>
</comment>
<comment type="subcellular location">
    <subcellularLocation>
        <location evidence="1">Cell inner membrane</location>
        <topology evidence="1">Peripheral membrane protein</topology>
    </subcellularLocation>
</comment>
<comment type="similarity">
    <text evidence="1">Belongs to the ABC transporter superfamily. Xylose importer (TC 3.A.1.2.4) family.</text>
</comment>
<comment type="sequence caution" evidence="2">
    <conflict type="erroneous initiation">
        <sequence resource="EMBL-CDS" id="ABE09536"/>
    </conflict>
</comment>
<accession>Q1R528</accession>
<evidence type="ECO:0000255" key="1">
    <source>
        <dbReference type="HAMAP-Rule" id="MF_01722"/>
    </source>
</evidence>
<evidence type="ECO:0000305" key="2"/>